<gene>
    <name type="primary">TRIM40</name>
    <name type="synonym">RNF35</name>
</gene>
<evidence type="ECO:0000255" key="1"/>
<evidence type="ECO:0000255" key="2">
    <source>
        <dbReference type="PROSITE-ProRule" id="PRU00024"/>
    </source>
</evidence>
<evidence type="ECO:0000255" key="3">
    <source>
        <dbReference type="PROSITE-ProRule" id="PRU00175"/>
    </source>
</evidence>
<evidence type="ECO:0000269" key="4">
    <source>
    </source>
</evidence>
<evidence type="ECO:0000269" key="5">
    <source>
    </source>
</evidence>
<evidence type="ECO:0000303" key="6">
    <source>
    </source>
</evidence>
<evidence type="ECO:0000305" key="7"/>
<reference key="1">
    <citation type="journal article" date="2003" name="Tissue Antigens">
        <title>Cluster of TRIM genes in the human MHC class I region sharing the B30.2 domain.</title>
        <authorList>
            <person name="Meyer M."/>
            <person name="Gaudieri S."/>
            <person name="Rhodes D.A."/>
            <person name="Trowsdale J."/>
        </authorList>
    </citation>
    <scope>NUCLEOTIDE SEQUENCE [MRNA] (ISOFORM 2)</scope>
</reference>
<reference key="2">
    <citation type="journal article" date="2006" name="Genetics">
        <title>Rapid evolution of major histocompatibility complex class I genes in primates generates new disease alleles in humans via hitchhiking diversity.</title>
        <authorList>
            <person name="Shiina T."/>
            <person name="Ota M."/>
            <person name="Shimizu S."/>
            <person name="Katsuyama Y."/>
            <person name="Hashimoto N."/>
            <person name="Takasu M."/>
            <person name="Anzai T."/>
            <person name="Kulski J.K."/>
            <person name="Kikkawa E."/>
            <person name="Naruse T."/>
            <person name="Kimura N."/>
            <person name="Yanagiya K."/>
            <person name="Watanabe A."/>
            <person name="Hosomichi K."/>
            <person name="Kohara S."/>
            <person name="Iwamoto C."/>
            <person name="Umehara Y."/>
            <person name="Meyer A."/>
            <person name="Wanner V."/>
            <person name="Sano K."/>
            <person name="Macquin C."/>
            <person name="Ikeo K."/>
            <person name="Tokunaga K."/>
            <person name="Gojobori T."/>
            <person name="Inoko H."/>
            <person name="Bahram S."/>
        </authorList>
    </citation>
    <scope>NUCLEOTIDE SEQUENCE [LARGE SCALE GENOMIC DNA]</scope>
    <source>
        <tissue>Peripheral blood leukocyte</tissue>
    </source>
</reference>
<reference key="3">
    <citation type="journal article" date="2003" name="Nature">
        <title>The DNA sequence and analysis of human chromosome 6.</title>
        <authorList>
            <person name="Mungall A.J."/>
            <person name="Palmer S.A."/>
            <person name="Sims S.K."/>
            <person name="Edwards C.A."/>
            <person name="Ashurst J.L."/>
            <person name="Wilming L."/>
            <person name="Jones M.C."/>
            <person name="Horton R."/>
            <person name="Hunt S.E."/>
            <person name="Scott C.E."/>
            <person name="Gilbert J.G.R."/>
            <person name="Clamp M.E."/>
            <person name="Bethel G."/>
            <person name="Milne S."/>
            <person name="Ainscough R."/>
            <person name="Almeida J.P."/>
            <person name="Ambrose K.D."/>
            <person name="Andrews T.D."/>
            <person name="Ashwell R.I.S."/>
            <person name="Babbage A.K."/>
            <person name="Bagguley C.L."/>
            <person name="Bailey J."/>
            <person name="Banerjee R."/>
            <person name="Barker D.J."/>
            <person name="Barlow K.F."/>
            <person name="Bates K."/>
            <person name="Beare D.M."/>
            <person name="Beasley H."/>
            <person name="Beasley O."/>
            <person name="Bird C.P."/>
            <person name="Blakey S.E."/>
            <person name="Bray-Allen S."/>
            <person name="Brook J."/>
            <person name="Brown A.J."/>
            <person name="Brown J.Y."/>
            <person name="Burford D.C."/>
            <person name="Burrill W."/>
            <person name="Burton J."/>
            <person name="Carder C."/>
            <person name="Carter N.P."/>
            <person name="Chapman J.C."/>
            <person name="Clark S.Y."/>
            <person name="Clark G."/>
            <person name="Clee C.M."/>
            <person name="Clegg S."/>
            <person name="Cobley V."/>
            <person name="Collier R.E."/>
            <person name="Collins J.E."/>
            <person name="Colman L.K."/>
            <person name="Corby N.R."/>
            <person name="Coville G.J."/>
            <person name="Culley K.M."/>
            <person name="Dhami P."/>
            <person name="Davies J."/>
            <person name="Dunn M."/>
            <person name="Earthrowl M.E."/>
            <person name="Ellington A.E."/>
            <person name="Evans K.A."/>
            <person name="Faulkner L."/>
            <person name="Francis M.D."/>
            <person name="Frankish A."/>
            <person name="Frankland J."/>
            <person name="French L."/>
            <person name="Garner P."/>
            <person name="Garnett J."/>
            <person name="Ghori M.J."/>
            <person name="Gilby L.M."/>
            <person name="Gillson C.J."/>
            <person name="Glithero R.J."/>
            <person name="Grafham D.V."/>
            <person name="Grant M."/>
            <person name="Gribble S."/>
            <person name="Griffiths C."/>
            <person name="Griffiths M.N.D."/>
            <person name="Hall R."/>
            <person name="Halls K.S."/>
            <person name="Hammond S."/>
            <person name="Harley J.L."/>
            <person name="Hart E.A."/>
            <person name="Heath P.D."/>
            <person name="Heathcott R."/>
            <person name="Holmes S.J."/>
            <person name="Howden P.J."/>
            <person name="Howe K.L."/>
            <person name="Howell G.R."/>
            <person name="Huckle E."/>
            <person name="Humphray S.J."/>
            <person name="Humphries M.D."/>
            <person name="Hunt A.R."/>
            <person name="Johnson C.M."/>
            <person name="Joy A.A."/>
            <person name="Kay M."/>
            <person name="Keenan S.J."/>
            <person name="Kimberley A.M."/>
            <person name="King A."/>
            <person name="Laird G.K."/>
            <person name="Langford C."/>
            <person name="Lawlor S."/>
            <person name="Leongamornlert D.A."/>
            <person name="Leversha M."/>
            <person name="Lloyd C.R."/>
            <person name="Lloyd D.M."/>
            <person name="Loveland J.E."/>
            <person name="Lovell J."/>
            <person name="Martin S."/>
            <person name="Mashreghi-Mohammadi M."/>
            <person name="Maslen G.L."/>
            <person name="Matthews L."/>
            <person name="McCann O.T."/>
            <person name="McLaren S.J."/>
            <person name="McLay K."/>
            <person name="McMurray A."/>
            <person name="Moore M.J.F."/>
            <person name="Mullikin J.C."/>
            <person name="Niblett D."/>
            <person name="Nickerson T."/>
            <person name="Novik K.L."/>
            <person name="Oliver K."/>
            <person name="Overton-Larty E.K."/>
            <person name="Parker A."/>
            <person name="Patel R."/>
            <person name="Pearce A.V."/>
            <person name="Peck A.I."/>
            <person name="Phillimore B.J.C.T."/>
            <person name="Phillips S."/>
            <person name="Plumb R.W."/>
            <person name="Porter K.M."/>
            <person name="Ramsey Y."/>
            <person name="Ranby S.A."/>
            <person name="Rice C.M."/>
            <person name="Ross M.T."/>
            <person name="Searle S.M."/>
            <person name="Sehra H.K."/>
            <person name="Sheridan E."/>
            <person name="Skuce C.D."/>
            <person name="Smith S."/>
            <person name="Smith M."/>
            <person name="Spraggon L."/>
            <person name="Squares S.L."/>
            <person name="Steward C.A."/>
            <person name="Sycamore N."/>
            <person name="Tamlyn-Hall G."/>
            <person name="Tester J."/>
            <person name="Theaker A.J."/>
            <person name="Thomas D.W."/>
            <person name="Thorpe A."/>
            <person name="Tracey A."/>
            <person name="Tromans A."/>
            <person name="Tubby B."/>
            <person name="Wall M."/>
            <person name="Wallis J.M."/>
            <person name="West A.P."/>
            <person name="White S.S."/>
            <person name="Whitehead S.L."/>
            <person name="Whittaker H."/>
            <person name="Wild A."/>
            <person name="Willey D.J."/>
            <person name="Wilmer T.E."/>
            <person name="Wood J.M."/>
            <person name="Wray P.W."/>
            <person name="Wyatt J.C."/>
            <person name="Young L."/>
            <person name="Younger R.M."/>
            <person name="Bentley D.R."/>
            <person name="Coulson A."/>
            <person name="Durbin R.M."/>
            <person name="Hubbard T."/>
            <person name="Sulston J.E."/>
            <person name="Dunham I."/>
            <person name="Rogers J."/>
            <person name="Beck S."/>
        </authorList>
    </citation>
    <scope>NUCLEOTIDE SEQUENCE [LARGE SCALE GENOMIC DNA]</scope>
</reference>
<reference key="4">
    <citation type="submission" date="2005-07" db="EMBL/GenBank/DDBJ databases">
        <authorList>
            <person name="Mural R.J."/>
            <person name="Istrail S."/>
            <person name="Sutton G.G."/>
            <person name="Florea L."/>
            <person name="Halpern A.L."/>
            <person name="Mobarry C.M."/>
            <person name="Lippert R."/>
            <person name="Walenz B."/>
            <person name="Shatkay H."/>
            <person name="Dew I."/>
            <person name="Miller J.R."/>
            <person name="Flanigan M.J."/>
            <person name="Edwards N.J."/>
            <person name="Bolanos R."/>
            <person name="Fasulo D."/>
            <person name="Halldorsson B.V."/>
            <person name="Hannenhalli S."/>
            <person name="Turner R."/>
            <person name="Yooseph S."/>
            <person name="Lu F."/>
            <person name="Nusskern D.R."/>
            <person name="Shue B.C."/>
            <person name="Zheng X.H."/>
            <person name="Zhong F."/>
            <person name="Delcher A.L."/>
            <person name="Huson D.H."/>
            <person name="Kravitz S.A."/>
            <person name="Mouchard L."/>
            <person name="Reinert K."/>
            <person name="Remington K.A."/>
            <person name="Clark A.G."/>
            <person name="Waterman M.S."/>
            <person name="Eichler E.E."/>
            <person name="Adams M.D."/>
            <person name="Hunkapiller M.W."/>
            <person name="Myers E.W."/>
            <person name="Venter J.C."/>
        </authorList>
    </citation>
    <scope>NUCLEOTIDE SEQUENCE [LARGE SCALE GENOMIC DNA]</scope>
</reference>
<reference key="5">
    <citation type="journal article" date="2004" name="Genome Res.">
        <title>The status, quality, and expansion of the NIH full-length cDNA project: the Mammalian Gene Collection (MGC).</title>
        <authorList>
            <consortium name="The MGC Project Team"/>
        </authorList>
    </citation>
    <scope>NUCLEOTIDE SEQUENCE [LARGE SCALE MRNA] (ISOFORM 1)</scope>
    <source>
        <tissue>Placenta</tissue>
    </source>
</reference>
<reference key="6">
    <citation type="journal article" date="2011" name="Carcinogenesis">
        <title>TRIM40 promotes neddylation of IKKgamma and is downregulated in gastrointestinal cancers.</title>
        <authorList>
            <person name="Noguchi K."/>
            <person name="Okumura F."/>
            <person name="Takahashi N."/>
            <person name="Kataoka A."/>
            <person name="Kamiyama T."/>
            <person name="Todo S."/>
            <person name="Hatakeyama S."/>
        </authorList>
    </citation>
    <scope>FUNCTION</scope>
    <scope>TISSUE SPECIFICITY</scope>
    <scope>INTERACTION WITH NEDD8</scope>
</reference>
<reference key="7">
    <citation type="journal article" date="2017" name="Cell Rep.">
        <title>The E3 Ubiquitin Ligase TRIM40 Attenuates Antiviral Immune Responses by Targeting MDA5 and RIG-I.</title>
        <authorList>
            <person name="Zhao C."/>
            <person name="Jia M."/>
            <person name="Song H."/>
            <person name="Yu Z."/>
            <person name="Wang W."/>
            <person name="Li Q."/>
            <person name="Zhang L."/>
            <person name="Zhao W."/>
            <person name="Cao X."/>
        </authorList>
    </citation>
    <scope>FUNCTION</scope>
    <scope>CATALYTIC ACTIVITY</scope>
</reference>
<proteinExistence type="evidence at protein level"/>
<comment type="function">
    <text evidence="4 5">E3 ubiquitin-protein ligase that plays a role in the limitation of the innate immune response (PubMed:21474709, PubMed:29117565). Mediates inhibition of the RLR signaling pathway by ubiquitinating RIGI and IFIH1 receptors, leading to their proteasomal degradation (PubMed:21474709). Also promotes the neddylation of IKBKG/NEMO, stabilizing NFKBIA, and thereby inhibiting of NF-kappa-B nuclear translocation and activation (PubMed:21474709).</text>
</comment>
<comment type="catalytic activity">
    <reaction evidence="5">
        <text>S-ubiquitinyl-[E2 ubiquitin-conjugating enzyme]-L-cysteine + [acceptor protein]-L-lysine = [E2 ubiquitin-conjugating enzyme]-L-cysteine + N(6)-ubiquitinyl-[acceptor protein]-L-lysine.</text>
        <dbReference type="EC" id="2.3.2.27"/>
    </reaction>
</comment>
<comment type="subunit">
    <text evidence="4">Interacts with NEDD8.</text>
</comment>
<comment type="alternative products">
    <event type="alternative splicing"/>
    <isoform>
        <id>Q6P9F5-1</id>
        <name>1</name>
        <sequence type="displayed"/>
    </isoform>
    <isoform>
        <id>Q6P9F5-2</id>
        <name>2</name>
        <sequence type="described" ref="VSP_012131"/>
    </isoform>
</comment>
<comment type="tissue specificity">
    <text evidence="4">Highly expressed in normal gastrointestinal epithelia but that is down-regulated in gastrointestinal carcinomas and chronic inflammatory lesions of the gastrointestinal tract.</text>
</comment>
<comment type="similarity">
    <text evidence="7">Belongs to the TRIM/RBCC family.</text>
</comment>
<dbReference type="EC" id="2.3.2.27" evidence="5"/>
<dbReference type="EMBL" id="AF489517">
    <property type="protein sequence ID" value="AAM09503.1"/>
    <property type="molecule type" value="mRNA"/>
</dbReference>
<dbReference type="EMBL" id="AB110939">
    <property type="protein sequence ID" value="BAD13705.1"/>
    <property type="molecule type" value="Genomic_DNA"/>
</dbReference>
<dbReference type="EMBL" id="AB110940">
    <property type="protein sequence ID" value="BAD13706.1"/>
    <property type="molecule type" value="Genomic_DNA"/>
</dbReference>
<dbReference type="EMBL" id="AB202084">
    <property type="protein sequence ID" value="BAE78604.1"/>
    <property type="molecule type" value="Genomic_DNA"/>
</dbReference>
<dbReference type="EMBL" id="AL669914">
    <property type="status" value="NOT_ANNOTATED_CDS"/>
    <property type="molecule type" value="Genomic_DNA"/>
</dbReference>
<dbReference type="EMBL" id="BX322644">
    <property type="status" value="NOT_ANNOTATED_CDS"/>
    <property type="molecule type" value="Genomic_DNA"/>
</dbReference>
<dbReference type="EMBL" id="AL671859">
    <property type="status" value="NOT_ANNOTATED_CDS"/>
    <property type="molecule type" value="Genomic_DNA"/>
</dbReference>
<dbReference type="EMBL" id="CR788282">
    <property type="status" value="NOT_ANNOTATED_CDS"/>
    <property type="molecule type" value="Genomic_DNA"/>
</dbReference>
<dbReference type="EMBL" id="BX927221">
    <property type="status" value="NOT_ANNOTATED_CDS"/>
    <property type="molecule type" value="Genomic_DNA"/>
</dbReference>
<dbReference type="EMBL" id="CH471081">
    <property type="protein sequence ID" value="EAX03265.1"/>
    <property type="molecule type" value="Genomic_DNA"/>
</dbReference>
<dbReference type="EMBL" id="CH471081">
    <property type="protein sequence ID" value="EAX03266.1"/>
    <property type="molecule type" value="Genomic_DNA"/>
</dbReference>
<dbReference type="EMBL" id="BC060785">
    <property type="protein sequence ID" value="AAH60785.1"/>
    <property type="molecule type" value="mRNA"/>
</dbReference>
<dbReference type="CCDS" id="CCDS4675.1">
    <molecule id="Q6P9F5-2"/>
</dbReference>
<dbReference type="CCDS" id="CCDS69069.1">
    <molecule id="Q6P9F5-1"/>
</dbReference>
<dbReference type="RefSeq" id="NP_001273562.1">
    <molecule id="Q6P9F5-1"/>
    <property type="nucleotide sequence ID" value="NM_001286633.2"/>
</dbReference>
<dbReference type="RefSeq" id="NP_619645.1">
    <molecule id="Q6P9F5-2"/>
    <property type="nucleotide sequence ID" value="NM_138700.4"/>
</dbReference>
<dbReference type="RefSeq" id="XP_011512607.1">
    <property type="nucleotide sequence ID" value="XM_011514305.1"/>
</dbReference>
<dbReference type="RefSeq" id="XP_011512608.1">
    <molecule id="Q6P9F5-1"/>
    <property type="nucleotide sequence ID" value="XM_011514306.2"/>
</dbReference>
<dbReference type="RefSeq" id="XP_054184422.1">
    <molecule id="Q6P9F5-1"/>
    <property type="nucleotide sequence ID" value="XM_054328447.1"/>
</dbReference>
<dbReference type="RefSeq" id="XP_054184423.1">
    <molecule id="Q6P9F5-1"/>
    <property type="nucleotide sequence ID" value="XM_054328448.1"/>
</dbReference>
<dbReference type="RefSeq" id="XP_054185712.1">
    <molecule id="Q6P9F5-1"/>
    <property type="nucleotide sequence ID" value="XM_054329737.1"/>
</dbReference>
<dbReference type="RefSeq" id="XP_054186500.1">
    <molecule id="Q6P9F5-1"/>
    <property type="nucleotide sequence ID" value="XM_054330525.1"/>
</dbReference>
<dbReference type="RefSeq" id="XP_054186501.1">
    <molecule id="Q6P9F5-1"/>
    <property type="nucleotide sequence ID" value="XM_054330526.1"/>
</dbReference>
<dbReference type="RefSeq" id="XP_054186984.1">
    <molecule id="Q6P9F5-1"/>
    <property type="nucleotide sequence ID" value="XM_054331009.1"/>
</dbReference>
<dbReference type="RefSeq" id="XP_054210303.1">
    <molecule id="Q6P9F5-1"/>
    <property type="nucleotide sequence ID" value="XM_054354328.1"/>
</dbReference>
<dbReference type="RefSeq" id="XP_054210304.1">
    <molecule id="Q6P9F5-1"/>
    <property type="nucleotide sequence ID" value="XM_054354329.1"/>
</dbReference>
<dbReference type="SMR" id="Q6P9F5"/>
<dbReference type="BioGRID" id="126432">
    <property type="interactions" value="16"/>
</dbReference>
<dbReference type="FunCoup" id="Q6P9F5">
    <property type="interactions" value="13"/>
</dbReference>
<dbReference type="IntAct" id="Q6P9F5">
    <property type="interactions" value="1"/>
</dbReference>
<dbReference type="MINT" id="Q6P9F5"/>
<dbReference type="STRING" id="9606.ENSP00000379826"/>
<dbReference type="GlyGen" id="Q6P9F5">
    <property type="glycosylation" value="2 sites, 1 N-linked glycan (1 site), 1 O-linked glycan (1 site)"/>
</dbReference>
<dbReference type="iPTMnet" id="Q6P9F5"/>
<dbReference type="PhosphoSitePlus" id="Q6P9F5"/>
<dbReference type="BioMuta" id="TRIM40"/>
<dbReference type="DMDM" id="229463021"/>
<dbReference type="MassIVE" id="Q6P9F5"/>
<dbReference type="PaxDb" id="9606-ENSP00000379826"/>
<dbReference type="PeptideAtlas" id="Q6P9F5"/>
<dbReference type="ProteomicsDB" id="67040">
    <molecule id="Q6P9F5-1"/>
</dbReference>
<dbReference type="ProteomicsDB" id="67041">
    <molecule id="Q6P9F5-2"/>
</dbReference>
<dbReference type="Antibodypedia" id="26227">
    <property type="antibodies" value="87 antibodies from 26 providers"/>
</dbReference>
<dbReference type="DNASU" id="135644"/>
<dbReference type="Ensembl" id="ENST00000307859.4">
    <molecule id="Q6P9F5-2"/>
    <property type="protein sequence ID" value="ENSP00000308310.4"/>
    <property type="gene ID" value="ENSG00000204614.9"/>
</dbReference>
<dbReference type="Ensembl" id="ENST00000376724.6">
    <molecule id="Q6P9F5-1"/>
    <property type="protein sequence ID" value="ENSP00000365914.2"/>
    <property type="gene ID" value="ENSG00000204614.9"/>
</dbReference>
<dbReference type="Ensembl" id="ENST00000383610.6">
    <molecule id="Q6P9F5-1"/>
    <property type="protein sequence ID" value="ENSP00000373105.2"/>
    <property type="gene ID" value="ENSG00000172524.12"/>
</dbReference>
<dbReference type="Ensembl" id="ENST00000396581.6">
    <molecule id="Q6P9F5-1"/>
    <property type="protein sequence ID" value="ENSP00000379826.1"/>
    <property type="gene ID" value="ENSG00000204614.9"/>
</dbReference>
<dbReference type="Ensembl" id="ENST00000400651.7">
    <molecule id="Q6P9F5-2"/>
    <property type="protein sequence ID" value="ENSP00000383492.3"/>
    <property type="gene ID" value="ENSG00000172524.12"/>
</dbReference>
<dbReference type="Ensembl" id="ENST00000421981.6">
    <molecule id="Q6P9F5-2"/>
    <property type="protein sequence ID" value="ENSP00000403025.2"/>
    <property type="gene ID" value="ENSG00000237046.8"/>
</dbReference>
<dbReference type="Ensembl" id="ENST00000429471.6">
    <molecule id="Q6P9F5-2"/>
    <property type="protein sequence ID" value="ENSP00000393674.2"/>
    <property type="gene ID" value="ENSG00000228001.8"/>
</dbReference>
<dbReference type="Ensembl" id="ENST00000433713.5">
    <molecule id="Q6P9F5-1"/>
    <property type="protein sequence ID" value="ENSP00000389607.1"/>
    <property type="gene ID" value="ENSG00000224496.7"/>
</dbReference>
<dbReference type="Ensembl" id="ENST00000434151.5">
    <molecule id="Q6P9F5-1"/>
    <property type="protein sequence ID" value="ENSP00000388460.1"/>
    <property type="gene ID" value="ENSG00000237046.8"/>
</dbReference>
<dbReference type="Ensembl" id="ENST00000436951.6">
    <molecule id="Q6P9F5-2"/>
    <property type="protein sequence ID" value="ENSP00000416663.2"/>
    <property type="gene ID" value="ENSG00000224496.7"/>
</dbReference>
<dbReference type="Ensembl" id="ENST00000437563.5">
    <molecule id="Q6P9F5-1"/>
    <property type="protein sequence ID" value="ENSP00000416950.1"/>
    <property type="gene ID" value="ENSG00000228001.8"/>
</dbReference>
<dbReference type="Ensembl" id="ENST00000547289.2">
    <molecule id="Q6P9F5-1"/>
    <property type="protein sequence ID" value="ENSP00000446663.1"/>
    <property type="gene ID" value="ENSG00000172524.12"/>
</dbReference>
<dbReference type="Ensembl" id="ENST00000549728.2">
    <molecule id="Q6P9F5-1"/>
    <property type="protein sequence ID" value="ENSP00000447016.1"/>
    <property type="gene ID" value="ENSG00000237046.8"/>
</dbReference>
<dbReference type="Ensembl" id="ENST00000552119.2">
    <molecule id="Q6P9F5-1"/>
    <property type="protein sequence ID" value="ENSP00000448967.1"/>
    <property type="gene ID" value="ENSG00000228001.8"/>
</dbReference>
<dbReference type="Ensembl" id="ENST00000616351.1">
    <molecule id="Q6P9F5-1"/>
    <property type="protein sequence ID" value="ENSP00000483120.1"/>
    <property type="gene ID" value="ENSG00000224496.7"/>
</dbReference>
<dbReference type="GeneID" id="135644"/>
<dbReference type="KEGG" id="hsa:135644"/>
<dbReference type="MANE-Select" id="ENST00000396581.6">
    <property type="protein sequence ID" value="ENSP00000379826.1"/>
    <property type="RefSeq nucleotide sequence ID" value="NM_001286633.2"/>
    <property type="RefSeq protein sequence ID" value="NP_001273562.1"/>
</dbReference>
<dbReference type="UCSC" id="uc003npk.2">
    <molecule id="Q6P9F5-1"/>
    <property type="organism name" value="human"/>
</dbReference>
<dbReference type="AGR" id="HGNC:18736"/>
<dbReference type="CTD" id="135644"/>
<dbReference type="DisGeNET" id="135644"/>
<dbReference type="GeneCards" id="TRIM40"/>
<dbReference type="HGNC" id="HGNC:18736">
    <property type="gene designation" value="TRIM40"/>
</dbReference>
<dbReference type="HPA" id="ENSG00000204614">
    <property type="expression patterns" value="Group enriched (intestine, liver, testis)"/>
</dbReference>
<dbReference type="MIM" id="616976">
    <property type="type" value="gene"/>
</dbReference>
<dbReference type="neXtProt" id="NX_Q6P9F5"/>
<dbReference type="OpenTargets" id="ENSG00000204614"/>
<dbReference type="PharmGKB" id="PA38663"/>
<dbReference type="VEuPathDB" id="HostDB:ENSG00000204614"/>
<dbReference type="eggNOG" id="KOG2177">
    <property type="taxonomic scope" value="Eukaryota"/>
</dbReference>
<dbReference type="GeneTree" id="ENSGT00710000106875"/>
<dbReference type="HOGENOM" id="CLU_013137_3_0_1"/>
<dbReference type="InParanoid" id="Q6P9F5"/>
<dbReference type="OMA" id="CLESPEH"/>
<dbReference type="OrthoDB" id="654191at2759"/>
<dbReference type="PAN-GO" id="Q6P9F5">
    <property type="GO annotations" value="5 GO annotations based on evolutionary models"/>
</dbReference>
<dbReference type="PhylomeDB" id="Q6P9F5"/>
<dbReference type="TreeFam" id="TF333491"/>
<dbReference type="PathwayCommons" id="Q6P9F5"/>
<dbReference type="SignaLink" id="Q6P9F5"/>
<dbReference type="SIGNOR" id="Q6P9F5"/>
<dbReference type="BioGRID-ORCS" id="135644">
    <property type="hits" value="13 hits in 1182 CRISPR screens"/>
</dbReference>
<dbReference type="ChiTaRS" id="TRIM40">
    <property type="organism name" value="human"/>
</dbReference>
<dbReference type="GenomeRNAi" id="135644"/>
<dbReference type="Pharos" id="Q6P9F5">
    <property type="development level" value="Tbio"/>
</dbReference>
<dbReference type="PRO" id="PR:Q6P9F5"/>
<dbReference type="Proteomes" id="UP000005640">
    <property type="component" value="Chromosome 6"/>
</dbReference>
<dbReference type="RNAct" id="Q6P9F5">
    <property type="molecule type" value="protein"/>
</dbReference>
<dbReference type="Bgee" id="ENSG00000204614">
    <property type="expression patterns" value="Expressed in duodenum and 28 other cell types or tissues"/>
</dbReference>
<dbReference type="ExpressionAtlas" id="Q6P9F5">
    <property type="expression patterns" value="baseline and differential"/>
</dbReference>
<dbReference type="GO" id="GO:0005737">
    <property type="term" value="C:cytoplasm"/>
    <property type="evidence" value="ECO:0000318"/>
    <property type="project" value="GO_Central"/>
</dbReference>
<dbReference type="GO" id="GO:0008385">
    <property type="term" value="C:IkappaB kinase complex"/>
    <property type="evidence" value="ECO:0000314"/>
    <property type="project" value="UniProtKB"/>
</dbReference>
<dbReference type="GO" id="GO:0061630">
    <property type="term" value="F:ubiquitin protein ligase activity"/>
    <property type="evidence" value="ECO:0000318"/>
    <property type="project" value="GO_Central"/>
</dbReference>
<dbReference type="GO" id="GO:0008270">
    <property type="term" value="F:zinc ion binding"/>
    <property type="evidence" value="ECO:0007669"/>
    <property type="project" value="UniProtKB-KW"/>
</dbReference>
<dbReference type="GO" id="GO:0045087">
    <property type="term" value="P:innate immune response"/>
    <property type="evidence" value="ECO:0000318"/>
    <property type="project" value="GO_Central"/>
</dbReference>
<dbReference type="GO" id="GO:0030308">
    <property type="term" value="P:negative regulation of cell growth"/>
    <property type="evidence" value="ECO:0007669"/>
    <property type="project" value="Ensembl"/>
</dbReference>
<dbReference type="GO" id="GO:0032088">
    <property type="term" value="P:negative regulation of NF-kappaB transcription factor activity"/>
    <property type="evidence" value="ECO:0000314"/>
    <property type="project" value="UniProtKB"/>
</dbReference>
<dbReference type="GO" id="GO:1901223">
    <property type="term" value="P:negative regulation of non-canonical NF-kappaB signal transduction"/>
    <property type="evidence" value="ECO:0000303"/>
    <property type="project" value="UniProtKB"/>
</dbReference>
<dbReference type="GO" id="GO:0042177">
    <property type="term" value="P:negative regulation of protein catabolic process"/>
    <property type="evidence" value="ECO:0000314"/>
    <property type="project" value="UniProtKB"/>
</dbReference>
<dbReference type="GO" id="GO:1900181">
    <property type="term" value="P:negative regulation of protein localization to nucleus"/>
    <property type="evidence" value="ECO:0000314"/>
    <property type="project" value="UniProtKB"/>
</dbReference>
<dbReference type="GO" id="GO:0045116">
    <property type="term" value="P:protein neddylation"/>
    <property type="evidence" value="ECO:0000314"/>
    <property type="project" value="UniProtKB"/>
</dbReference>
<dbReference type="CDD" id="cd19781">
    <property type="entry name" value="Bbox2_TRIM40_C-V"/>
    <property type="match status" value="1"/>
</dbReference>
<dbReference type="CDD" id="cd16583">
    <property type="entry name" value="RING-HC_TRIM40-C-V"/>
    <property type="match status" value="1"/>
</dbReference>
<dbReference type="FunFam" id="3.30.160.60:FF:003062">
    <property type="entry name" value="Tripartite motif-containing protein 40"/>
    <property type="match status" value="1"/>
</dbReference>
<dbReference type="FunFam" id="3.30.40.10:FF:000775">
    <property type="entry name" value="Tripartite motif-containing protein 40"/>
    <property type="match status" value="1"/>
</dbReference>
<dbReference type="Gene3D" id="3.30.160.60">
    <property type="entry name" value="Classic Zinc Finger"/>
    <property type="match status" value="1"/>
</dbReference>
<dbReference type="Gene3D" id="3.30.40.10">
    <property type="entry name" value="Zinc/RING finger domain, C3HC4 (zinc finger)"/>
    <property type="match status" value="1"/>
</dbReference>
<dbReference type="InterPro" id="IPR050143">
    <property type="entry name" value="TRIM/RBCC"/>
</dbReference>
<dbReference type="InterPro" id="IPR000315">
    <property type="entry name" value="Znf_B-box"/>
</dbReference>
<dbReference type="InterPro" id="IPR018957">
    <property type="entry name" value="Znf_C3HC4_RING-type"/>
</dbReference>
<dbReference type="InterPro" id="IPR001841">
    <property type="entry name" value="Znf_RING"/>
</dbReference>
<dbReference type="InterPro" id="IPR013083">
    <property type="entry name" value="Znf_RING/FYVE/PHD"/>
</dbReference>
<dbReference type="InterPro" id="IPR017907">
    <property type="entry name" value="Znf_RING_CS"/>
</dbReference>
<dbReference type="PANTHER" id="PTHR24103">
    <property type="entry name" value="E3 UBIQUITIN-PROTEIN LIGASE TRIM"/>
    <property type="match status" value="1"/>
</dbReference>
<dbReference type="Pfam" id="PF00097">
    <property type="entry name" value="zf-C3HC4"/>
    <property type="match status" value="1"/>
</dbReference>
<dbReference type="SMART" id="SM00184">
    <property type="entry name" value="RING"/>
    <property type="match status" value="1"/>
</dbReference>
<dbReference type="SUPFAM" id="SSF57845">
    <property type="entry name" value="B-box zinc-binding domain"/>
    <property type="match status" value="1"/>
</dbReference>
<dbReference type="SUPFAM" id="SSF57850">
    <property type="entry name" value="RING/U-box"/>
    <property type="match status" value="1"/>
</dbReference>
<dbReference type="PROSITE" id="PS50119">
    <property type="entry name" value="ZF_BBOX"/>
    <property type="match status" value="1"/>
</dbReference>
<dbReference type="PROSITE" id="PS00518">
    <property type="entry name" value="ZF_RING_1"/>
    <property type="match status" value="1"/>
</dbReference>
<dbReference type="PROSITE" id="PS50089">
    <property type="entry name" value="ZF_RING_2"/>
    <property type="match status" value="1"/>
</dbReference>
<organism>
    <name type="scientific">Homo sapiens</name>
    <name type="common">Human</name>
    <dbReference type="NCBI Taxonomy" id="9606"/>
    <lineage>
        <taxon>Eukaryota</taxon>
        <taxon>Metazoa</taxon>
        <taxon>Chordata</taxon>
        <taxon>Craniata</taxon>
        <taxon>Vertebrata</taxon>
        <taxon>Euteleostomi</taxon>
        <taxon>Mammalia</taxon>
        <taxon>Eutheria</taxon>
        <taxon>Euarchontoglires</taxon>
        <taxon>Primates</taxon>
        <taxon>Haplorrhini</taxon>
        <taxon>Catarrhini</taxon>
        <taxon>Hominidae</taxon>
        <taxon>Homo</taxon>
    </lineage>
</organism>
<protein>
    <recommendedName>
        <fullName>E3 ubiquitin ligase TRIM40</fullName>
        <ecNumber evidence="5">2.3.2.27</ecNumber>
    </recommendedName>
    <alternativeName>
        <fullName>Probable E3 NEDD8-protein ligase</fullName>
    </alternativeName>
    <alternativeName>
        <fullName>RING finger protein 35</fullName>
    </alternativeName>
</protein>
<keyword id="KW-0025">Alternative splicing</keyword>
<keyword id="KW-0175">Coiled coil</keyword>
<keyword id="KW-0479">Metal-binding</keyword>
<keyword id="KW-1267">Proteomics identification</keyword>
<keyword id="KW-1185">Reference proteome</keyword>
<keyword id="KW-0808">Transferase</keyword>
<keyword id="KW-0833">Ubl conjugation pathway</keyword>
<keyword id="KW-0862">Zinc</keyword>
<keyword id="KW-0863">Zinc-finger</keyword>
<accession>Q6P9F5</accession>
<accession>Q5SRJ6</accession>
<accession>Q5SS36</accession>
<accession>Q8TD96</accession>
<feature type="chain" id="PRO_0000056260" description="E3 ubiquitin ligase TRIM40">
    <location>
        <begin position="1"/>
        <end position="258"/>
    </location>
</feature>
<feature type="zinc finger region" description="RING-type" evidence="3">
    <location>
        <begin position="14"/>
        <end position="56"/>
    </location>
</feature>
<feature type="zinc finger region" description="B box-type" evidence="2">
    <location>
        <begin position="66"/>
        <end position="107"/>
    </location>
</feature>
<feature type="coiled-coil region" evidence="1">
    <location>
        <begin position="107"/>
        <end position="159"/>
    </location>
</feature>
<feature type="binding site" evidence="2">
    <location>
        <position position="71"/>
    </location>
    <ligand>
        <name>Zn(2+)</name>
        <dbReference type="ChEBI" id="CHEBI:29105"/>
    </ligand>
</feature>
<feature type="binding site" evidence="2">
    <location>
        <position position="74"/>
    </location>
    <ligand>
        <name>Zn(2+)</name>
        <dbReference type="ChEBI" id="CHEBI:29105"/>
    </ligand>
</feature>
<feature type="binding site" evidence="2">
    <location>
        <position position="93"/>
    </location>
    <ligand>
        <name>Zn(2+)</name>
        <dbReference type="ChEBI" id="CHEBI:29105"/>
    </ligand>
</feature>
<feature type="binding site" evidence="2">
    <location>
        <position position="99"/>
    </location>
    <ligand>
        <name>Zn(2+)</name>
        <dbReference type="ChEBI" id="CHEBI:29105"/>
    </ligand>
</feature>
<feature type="splice variant" id="VSP_012131" description="In isoform 2." evidence="6">
    <location>
        <begin position="148"/>
        <end position="176"/>
    </location>
</feature>
<feature type="sequence variant" id="VAR_055309" description="In dbSNP:rs12528473.">
    <original>K</original>
    <variation>Q</variation>
    <location>
        <position position="142"/>
    </location>
</feature>
<feature type="sequence variant" id="VAR_055310" description="In dbSNP:rs757259.">
    <original>E</original>
    <variation>K</variation>
    <location>
        <position position="215"/>
    </location>
</feature>
<feature type="sequence variant" id="VAR_057222" description="In dbSNP:rs757259.">
    <original>E</original>
    <variation>K</variation>
    <location>
        <position position="244"/>
    </location>
</feature>
<name>TRI40_HUMAN</name>
<sequence length="258" mass="29336">MIPLQKDNQEEGVCPICQESLKEAVSTNCGHLFCRVCLTQHVEKASASGVFCCPLCRKPCSEEVLGTGYICPNHQKRVCRFCEESRLLLCVECLVSPEHMSHHELTIENALSHYKERLNRRSRKLRKDIAELQRLKAQQEKKLQALQFQVDHGNHRLEAGPESQHQTREQLGALPQQWLGQLEHMPAEAARILDISRAVTQLRSLVIDLERTAKELDTNTLKNAGDLLNRSAPQKLEVIYPQLEKGVSELLLQPPQKL</sequence>